<proteinExistence type="evidence at protein level"/>
<evidence type="ECO:0000250" key="1"/>
<evidence type="ECO:0000255" key="2"/>
<evidence type="ECO:0000305" key="3"/>
<comment type="function">
    <text>Binds activated protein C. Enhances protein C activation by the thrombin-thrombomodulin complex; plays a role in the protein C pathway controlling blood coagulation.</text>
</comment>
<comment type="subcellular location">
    <subcellularLocation>
        <location>Membrane</location>
        <topology>Single-pass type I membrane protein</topology>
    </subcellularLocation>
</comment>
<comment type="tissue specificity">
    <text>Expressed in endothelial cells.</text>
</comment>
<gene>
    <name type="primary">Procr</name>
    <name type="synonym">Epcr</name>
</gene>
<keyword id="KW-0094">Blood coagulation</keyword>
<keyword id="KW-1015">Disulfide bond</keyword>
<keyword id="KW-0325">Glycoprotein</keyword>
<keyword id="KW-0356">Hemostasis</keyword>
<keyword id="KW-0472">Membrane</keyword>
<keyword id="KW-0675">Receptor</keyword>
<keyword id="KW-1185">Reference proteome</keyword>
<keyword id="KW-0732">Signal</keyword>
<keyword id="KW-0812">Transmembrane</keyword>
<keyword id="KW-1133">Transmembrane helix</keyword>
<feature type="signal peptide" evidence="2">
    <location>
        <begin position="1"/>
        <end position="17"/>
    </location>
</feature>
<feature type="chain" id="PRO_0000021192" description="Endothelial protein C receptor">
    <location>
        <begin position="18"/>
        <end position="242"/>
    </location>
</feature>
<feature type="topological domain" description="Extracellular" evidence="2">
    <location>
        <begin position="18"/>
        <end position="214"/>
    </location>
</feature>
<feature type="transmembrane region" description="Helical" evidence="2">
    <location>
        <begin position="215"/>
        <end position="235"/>
    </location>
</feature>
<feature type="topological domain" description="Cytoplasmic" evidence="2">
    <location>
        <begin position="236"/>
        <end position="242"/>
    </location>
</feature>
<feature type="glycosylation site" description="N-linked (GlcNAc...) asparagine" evidence="2">
    <location>
        <position position="46"/>
    </location>
</feature>
<feature type="glycosylation site" description="N-linked (GlcNAc...) asparagine" evidence="2">
    <location>
        <position position="63"/>
    </location>
</feature>
<feature type="glycosylation site" description="N-linked (GlcNAc...) asparagine" evidence="2">
    <location>
        <position position="140"/>
    </location>
</feature>
<feature type="glycosylation site" description="N-linked (GlcNAc...) asparagine" evidence="2">
    <location>
        <position position="166"/>
    </location>
</feature>
<feature type="glycosylation site" description="N-linked (GlcNAc...) asparagine" evidence="2">
    <location>
        <position position="176"/>
    </location>
</feature>
<feature type="disulfide bond" evidence="1">
    <location>
        <begin position="119"/>
        <end position="190"/>
    </location>
</feature>
<feature type="disulfide bond" evidence="1">
    <location>
        <begin position="223"/>
        <end position="236"/>
    </location>
</feature>
<feature type="sequence conflict" description="In Ref. 1; CAA45281." evidence="3" ref="1">
    <original>P</original>
    <variation>L</variation>
    <location>
        <position position="7"/>
    </location>
</feature>
<feature type="sequence conflict" description="In Ref. 1; CAA45281, 3; AAC42049 and 4; AAD43351." evidence="3" ref="1 3 4">
    <original>N</original>
    <variation>H</variation>
    <location>
        <position position="38"/>
    </location>
</feature>
<feature type="sequence conflict" description="In Ref. 1; CAA45281." evidence="3" ref="1">
    <original>RC</original>
    <variation>GLLII</variation>
    <location>
        <begin position="241"/>
        <end position="242"/>
    </location>
</feature>
<sequence>MLTKFLPLLLLLLPGCALCNSDGSQSLHMLQISYFQDNHHVRHQGNASLGKLLTHTLEGPSQNVTILQLQPWQDPESWERTESGLQIYLTQFESLVKLVYRERKENVFFPLTVSCSLGCELPEEEEEGSEPHVFFDVAVNGSAFVSFRPKTAVWVSGSQEPSKAANFTLKQLNAYNRTRYELQEFLQDTCVEFLENHITTQNMKGSQTGRSYTSLVLGILMGCFIIAGVAVGIFMCTSGRRC</sequence>
<protein>
    <recommendedName>
        <fullName>Endothelial protein C receptor</fullName>
    </recommendedName>
    <alternativeName>
        <fullName>Activated protein C receptor</fullName>
        <shortName>APC receptor</shortName>
    </alternativeName>
    <alternativeName>
        <fullName>Centrocyclin</fullName>
    </alternativeName>
    <alternativeName>
        <fullName>Centrosomal protein CCD41</fullName>
    </alternativeName>
    <alternativeName>
        <fullName>Endothelial cell protein C receptor</fullName>
    </alternativeName>
    <cdAntigenName>CD201</cdAntigenName>
</protein>
<reference key="1">
    <citation type="journal article" date="1993" name="J. Cell Sci.">
        <title>cDNA-derived molecular characteristics and antibodies to a new centrosome-associated and G2/M phase-prevalent protein.</title>
        <authorList>
            <person name="Rothbarth K."/>
            <person name="Petzelt C."/>
            <person name="Lu X."/>
            <person name="Todorov I.T."/>
            <person name="Joswigt G.H."/>
            <person name="Pepperkok R."/>
            <person name="Ansorge W."/>
            <person name="Werner D."/>
        </authorList>
    </citation>
    <scope>NUCLEOTIDE SEQUENCE [MRNA]</scope>
</reference>
<reference key="2">
    <citation type="submission" date="2001-06" db="EMBL/GenBank/DDBJ databases">
        <authorList>
            <person name="Werner D."/>
        </authorList>
    </citation>
    <scope>SEQUENCE REVISION TO 18-47</scope>
</reference>
<reference key="3">
    <citation type="journal article" date="1995" name="J. Biol. Chem.">
        <title>Molecular cloning and expression of murine and bovine endothelial cell protein C/activated protein C receptor (EPCR). The structural and functional conservation in human, bovine, and murine EPCR.</title>
        <authorList>
            <person name="Fukudome K."/>
            <person name="Esmon C.T."/>
        </authorList>
    </citation>
    <scope>NUCLEOTIDE SEQUENCE [MRNA]</scope>
    <source>
        <tissue>Hemangioendothelioma</tissue>
    </source>
</reference>
<reference key="4">
    <citation type="journal article" date="1999" name="Thromb. Haemost.">
        <title>Nucleotide structure and characterization of the murine gene encoding the endothelial cell protein C receptor.</title>
        <authorList>
            <person name="Liang Z."/>
            <person name="Rosen E.D."/>
            <person name="Castellino F.J."/>
        </authorList>
    </citation>
    <scope>NUCLEOTIDE SEQUENCE [GENOMIC DNA]</scope>
    <source>
        <strain>129/Sv</strain>
    </source>
</reference>
<reference key="5">
    <citation type="journal article" date="2005" name="Science">
        <title>The transcriptional landscape of the mammalian genome.</title>
        <authorList>
            <person name="Carninci P."/>
            <person name="Kasukawa T."/>
            <person name="Katayama S."/>
            <person name="Gough J."/>
            <person name="Frith M.C."/>
            <person name="Maeda N."/>
            <person name="Oyama R."/>
            <person name="Ravasi T."/>
            <person name="Lenhard B."/>
            <person name="Wells C."/>
            <person name="Kodzius R."/>
            <person name="Shimokawa K."/>
            <person name="Bajic V.B."/>
            <person name="Brenner S.E."/>
            <person name="Batalov S."/>
            <person name="Forrest A.R."/>
            <person name="Zavolan M."/>
            <person name="Davis M.J."/>
            <person name="Wilming L.G."/>
            <person name="Aidinis V."/>
            <person name="Allen J.E."/>
            <person name="Ambesi-Impiombato A."/>
            <person name="Apweiler R."/>
            <person name="Aturaliya R.N."/>
            <person name="Bailey T.L."/>
            <person name="Bansal M."/>
            <person name="Baxter L."/>
            <person name="Beisel K.W."/>
            <person name="Bersano T."/>
            <person name="Bono H."/>
            <person name="Chalk A.M."/>
            <person name="Chiu K.P."/>
            <person name="Choudhary V."/>
            <person name="Christoffels A."/>
            <person name="Clutterbuck D.R."/>
            <person name="Crowe M.L."/>
            <person name="Dalla E."/>
            <person name="Dalrymple B.P."/>
            <person name="de Bono B."/>
            <person name="Della Gatta G."/>
            <person name="di Bernardo D."/>
            <person name="Down T."/>
            <person name="Engstrom P."/>
            <person name="Fagiolini M."/>
            <person name="Faulkner G."/>
            <person name="Fletcher C.F."/>
            <person name="Fukushima T."/>
            <person name="Furuno M."/>
            <person name="Futaki S."/>
            <person name="Gariboldi M."/>
            <person name="Georgii-Hemming P."/>
            <person name="Gingeras T.R."/>
            <person name="Gojobori T."/>
            <person name="Green R.E."/>
            <person name="Gustincich S."/>
            <person name="Harbers M."/>
            <person name="Hayashi Y."/>
            <person name="Hensch T.K."/>
            <person name="Hirokawa N."/>
            <person name="Hill D."/>
            <person name="Huminiecki L."/>
            <person name="Iacono M."/>
            <person name="Ikeo K."/>
            <person name="Iwama A."/>
            <person name="Ishikawa T."/>
            <person name="Jakt M."/>
            <person name="Kanapin A."/>
            <person name="Katoh M."/>
            <person name="Kawasawa Y."/>
            <person name="Kelso J."/>
            <person name="Kitamura H."/>
            <person name="Kitano H."/>
            <person name="Kollias G."/>
            <person name="Krishnan S.P."/>
            <person name="Kruger A."/>
            <person name="Kummerfeld S.K."/>
            <person name="Kurochkin I.V."/>
            <person name="Lareau L.F."/>
            <person name="Lazarevic D."/>
            <person name="Lipovich L."/>
            <person name="Liu J."/>
            <person name="Liuni S."/>
            <person name="McWilliam S."/>
            <person name="Madan Babu M."/>
            <person name="Madera M."/>
            <person name="Marchionni L."/>
            <person name="Matsuda H."/>
            <person name="Matsuzawa S."/>
            <person name="Miki H."/>
            <person name="Mignone F."/>
            <person name="Miyake S."/>
            <person name="Morris K."/>
            <person name="Mottagui-Tabar S."/>
            <person name="Mulder N."/>
            <person name="Nakano N."/>
            <person name="Nakauchi H."/>
            <person name="Ng P."/>
            <person name="Nilsson R."/>
            <person name="Nishiguchi S."/>
            <person name="Nishikawa S."/>
            <person name="Nori F."/>
            <person name="Ohara O."/>
            <person name="Okazaki Y."/>
            <person name="Orlando V."/>
            <person name="Pang K.C."/>
            <person name="Pavan W.J."/>
            <person name="Pavesi G."/>
            <person name="Pesole G."/>
            <person name="Petrovsky N."/>
            <person name="Piazza S."/>
            <person name="Reed J."/>
            <person name="Reid J.F."/>
            <person name="Ring B.Z."/>
            <person name="Ringwald M."/>
            <person name="Rost B."/>
            <person name="Ruan Y."/>
            <person name="Salzberg S.L."/>
            <person name="Sandelin A."/>
            <person name="Schneider C."/>
            <person name="Schoenbach C."/>
            <person name="Sekiguchi K."/>
            <person name="Semple C.A."/>
            <person name="Seno S."/>
            <person name="Sessa L."/>
            <person name="Sheng Y."/>
            <person name="Shibata Y."/>
            <person name="Shimada H."/>
            <person name="Shimada K."/>
            <person name="Silva D."/>
            <person name="Sinclair B."/>
            <person name="Sperling S."/>
            <person name="Stupka E."/>
            <person name="Sugiura K."/>
            <person name="Sultana R."/>
            <person name="Takenaka Y."/>
            <person name="Taki K."/>
            <person name="Tammoja K."/>
            <person name="Tan S.L."/>
            <person name="Tang S."/>
            <person name="Taylor M.S."/>
            <person name="Tegner J."/>
            <person name="Teichmann S.A."/>
            <person name="Ueda H.R."/>
            <person name="van Nimwegen E."/>
            <person name="Verardo R."/>
            <person name="Wei C.L."/>
            <person name="Yagi K."/>
            <person name="Yamanishi H."/>
            <person name="Zabarovsky E."/>
            <person name="Zhu S."/>
            <person name="Zimmer A."/>
            <person name="Hide W."/>
            <person name="Bult C."/>
            <person name="Grimmond S.M."/>
            <person name="Teasdale R.D."/>
            <person name="Liu E.T."/>
            <person name="Brusic V."/>
            <person name="Quackenbush J."/>
            <person name="Wahlestedt C."/>
            <person name="Mattick J.S."/>
            <person name="Hume D.A."/>
            <person name="Kai C."/>
            <person name="Sasaki D."/>
            <person name="Tomaru Y."/>
            <person name="Fukuda S."/>
            <person name="Kanamori-Katayama M."/>
            <person name="Suzuki M."/>
            <person name="Aoki J."/>
            <person name="Arakawa T."/>
            <person name="Iida J."/>
            <person name="Imamura K."/>
            <person name="Itoh M."/>
            <person name="Kato T."/>
            <person name="Kawaji H."/>
            <person name="Kawagashira N."/>
            <person name="Kawashima T."/>
            <person name="Kojima M."/>
            <person name="Kondo S."/>
            <person name="Konno H."/>
            <person name="Nakano K."/>
            <person name="Ninomiya N."/>
            <person name="Nishio T."/>
            <person name="Okada M."/>
            <person name="Plessy C."/>
            <person name="Shibata K."/>
            <person name="Shiraki T."/>
            <person name="Suzuki S."/>
            <person name="Tagami M."/>
            <person name="Waki K."/>
            <person name="Watahiki A."/>
            <person name="Okamura-Oho Y."/>
            <person name="Suzuki H."/>
            <person name="Kawai J."/>
            <person name="Hayashizaki Y."/>
        </authorList>
    </citation>
    <scope>NUCLEOTIDE SEQUENCE [LARGE SCALE MRNA]</scope>
    <source>
        <strain>C57BL/6J</strain>
        <tissue>Placenta</tissue>
        <tissue>Spleen</tissue>
    </source>
</reference>
<reference key="6">
    <citation type="submission" date="2005-07" db="EMBL/GenBank/DDBJ databases">
        <title>Cloning of mouse full open reading frames in Gateway(R) system entry vector (pDONR201).</title>
        <authorList>
            <person name="Ebert L."/>
            <person name="Muenstermann E."/>
            <person name="Schatten R."/>
            <person name="Henze S."/>
            <person name="Bohn E."/>
            <person name="Mollenhauer J."/>
            <person name="Wiemann S."/>
            <person name="Schick M."/>
            <person name="Korn B."/>
        </authorList>
    </citation>
    <scope>NUCLEOTIDE SEQUENCE [LARGE SCALE MRNA]</scope>
</reference>
<reference key="7">
    <citation type="journal article" date="2009" name="PLoS Biol.">
        <title>Lineage-specific biology revealed by a finished genome assembly of the mouse.</title>
        <authorList>
            <person name="Church D.M."/>
            <person name="Goodstadt L."/>
            <person name="Hillier L.W."/>
            <person name="Zody M.C."/>
            <person name="Goldstein S."/>
            <person name="She X."/>
            <person name="Bult C.J."/>
            <person name="Agarwala R."/>
            <person name="Cherry J.L."/>
            <person name="DiCuccio M."/>
            <person name="Hlavina W."/>
            <person name="Kapustin Y."/>
            <person name="Meric P."/>
            <person name="Maglott D."/>
            <person name="Birtle Z."/>
            <person name="Marques A.C."/>
            <person name="Graves T."/>
            <person name="Zhou S."/>
            <person name="Teague B."/>
            <person name="Potamousis K."/>
            <person name="Churas C."/>
            <person name="Place M."/>
            <person name="Herschleb J."/>
            <person name="Runnheim R."/>
            <person name="Forrest D."/>
            <person name="Amos-Landgraf J."/>
            <person name="Schwartz D.C."/>
            <person name="Cheng Z."/>
            <person name="Lindblad-Toh K."/>
            <person name="Eichler E.E."/>
            <person name="Ponting C.P."/>
        </authorList>
    </citation>
    <scope>NUCLEOTIDE SEQUENCE [LARGE SCALE GENOMIC DNA]</scope>
    <source>
        <strain>C57BL/6J</strain>
    </source>
</reference>
<reference key="8">
    <citation type="submission" date="2005-07" db="EMBL/GenBank/DDBJ databases">
        <authorList>
            <person name="Mural R.J."/>
            <person name="Adams M.D."/>
            <person name="Myers E.W."/>
            <person name="Smith H.O."/>
            <person name="Venter J.C."/>
        </authorList>
    </citation>
    <scope>NUCLEOTIDE SEQUENCE [LARGE SCALE GENOMIC DNA]</scope>
</reference>
<reference key="9">
    <citation type="journal article" date="2010" name="Cell">
        <title>A tissue-specific atlas of mouse protein phosphorylation and expression.</title>
        <authorList>
            <person name="Huttlin E.L."/>
            <person name="Jedrychowski M.P."/>
            <person name="Elias J.E."/>
            <person name="Goswami T."/>
            <person name="Rad R."/>
            <person name="Beausoleil S.A."/>
            <person name="Villen J."/>
            <person name="Haas W."/>
            <person name="Sowa M.E."/>
            <person name="Gygi S.P."/>
        </authorList>
    </citation>
    <scope>IDENTIFICATION BY MASS SPECTROMETRY [LARGE SCALE ANALYSIS]</scope>
    <source>
        <tissue>Kidney</tissue>
        <tissue>Lung</tissue>
        <tissue>Pancreas</tissue>
        <tissue>Spleen</tissue>
    </source>
</reference>
<accession>Q64695</accession>
<accession>Q4FK76</accession>
<accession>Q9WV33</accession>
<name>EPCR_MOUSE</name>
<dbReference type="EMBL" id="X63748">
    <property type="protein sequence ID" value="CAA45281.2"/>
    <property type="molecule type" value="mRNA"/>
</dbReference>
<dbReference type="EMBL" id="L39017">
    <property type="protein sequence ID" value="AAC42049.1"/>
    <property type="molecule type" value="mRNA"/>
</dbReference>
<dbReference type="EMBL" id="AF162695">
    <property type="protein sequence ID" value="AAD43351.1"/>
    <property type="molecule type" value="Genomic_DNA"/>
</dbReference>
<dbReference type="EMBL" id="AK143719">
    <property type="protein sequence ID" value="BAE25514.1"/>
    <property type="molecule type" value="mRNA"/>
</dbReference>
<dbReference type="EMBL" id="AK167302">
    <property type="protein sequence ID" value="BAE39407.1"/>
    <property type="molecule type" value="mRNA"/>
</dbReference>
<dbReference type="EMBL" id="CT010175">
    <property type="protein sequence ID" value="CAJ18383.1"/>
    <property type="molecule type" value="mRNA"/>
</dbReference>
<dbReference type="EMBL" id="AL929233">
    <property type="status" value="NOT_ANNOTATED_CDS"/>
    <property type="molecule type" value="Genomic_DNA"/>
</dbReference>
<dbReference type="EMBL" id="CH466551">
    <property type="protein sequence ID" value="EDL06143.1"/>
    <property type="molecule type" value="Genomic_DNA"/>
</dbReference>
<dbReference type="CCDS" id="CCDS16954.1"/>
<dbReference type="PIR" id="A55945">
    <property type="entry name" value="A55945"/>
</dbReference>
<dbReference type="PIR" id="S18948">
    <property type="entry name" value="S18948"/>
</dbReference>
<dbReference type="RefSeq" id="NP_035301.2">
    <property type="nucleotide sequence ID" value="NM_011171.3"/>
</dbReference>
<dbReference type="SMR" id="Q64695"/>
<dbReference type="FunCoup" id="Q64695">
    <property type="interactions" value="51"/>
</dbReference>
<dbReference type="STRING" id="10090.ENSMUSP00000029140"/>
<dbReference type="GlyCosmos" id="Q64695">
    <property type="glycosylation" value="5 sites, No reported glycans"/>
</dbReference>
<dbReference type="GlyGen" id="Q64695">
    <property type="glycosylation" value="5 sites, 2 N-linked glycans (3 sites)"/>
</dbReference>
<dbReference type="iPTMnet" id="Q64695"/>
<dbReference type="PhosphoSitePlus" id="Q64695"/>
<dbReference type="SwissPalm" id="Q64695"/>
<dbReference type="PaxDb" id="10090-ENSMUSP00000029140"/>
<dbReference type="PeptideAtlas" id="Q64695"/>
<dbReference type="ProteomicsDB" id="275529"/>
<dbReference type="Pumba" id="Q64695"/>
<dbReference type="Antibodypedia" id="11183">
    <property type="antibodies" value="710 antibodies from 39 providers"/>
</dbReference>
<dbReference type="DNASU" id="19124"/>
<dbReference type="Ensembl" id="ENSMUST00000029140.12">
    <property type="protein sequence ID" value="ENSMUSP00000029140.6"/>
    <property type="gene ID" value="ENSMUSG00000027611.13"/>
</dbReference>
<dbReference type="GeneID" id="19124"/>
<dbReference type="KEGG" id="mmu:19124"/>
<dbReference type="UCSC" id="uc008nlh.2">
    <property type="organism name" value="mouse"/>
</dbReference>
<dbReference type="AGR" id="MGI:104596"/>
<dbReference type="CTD" id="10544"/>
<dbReference type="MGI" id="MGI:104596">
    <property type="gene designation" value="Procr"/>
</dbReference>
<dbReference type="VEuPathDB" id="HostDB:ENSMUSG00000027611"/>
<dbReference type="eggNOG" id="ENOG502S3SK">
    <property type="taxonomic scope" value="Eukaryota"/>
</dbReference>
<dbReference type="GeneTree" id="ENSGT00390000001159"/>
<dbReference type="HOGENOM" id="CLU_1151498_0_0_1"/>
<dbReference type="InParanoid" id="Q64695"/>
<dbReference type="OMA" id="WGNASLD"/>
<dbReference type="OrthoDB" id="9441389at2759"/>
<dbReference type="PhylomeDB" id="Q64695"/>
<dbReference type="TreeFam" id="TF335868"/>
<dbReference type="Reactome" id="R-MMU-140875">
    <property type="pathway name" value="Common Pathway of Fibrin Clot Formation"/>
</dbReference>
<dbReference type="Reactome" id="R-MMU-202733">
    <property type="pathway name" value="Cell surface interactions at the vascular wall"/>
</dbReference>
<dbReference type="BioGRID-ORCS" id="19124">
    <property type="hits" value="1 hit in 79 CRISPR screens"/>
</dbReference>
<dbReference type="CD-CODE" id="01CA17F3">
    <property type="entry name" value="Centrosome"/>
</dbReference>
<dbReference type="ChiTaRS" id="Procr">
    <property type="organism name" value="mouse"/>
</dbReference>
<dbReference type="PRO" id="PR:Q64695"/>
<dbReference type="Proteomes" id="UP000000589">
    <property type="component" value="Chromosome 2"/>
</dbReference>
<dbReference type="RNAct" id="Q64695">
    <property type="molecule type" value="protein"/>
</dbReference>
<dbReference type="Bgee" id="ENSMUSG00000027611">
    <property type="expression patterns" value="Expressed in decidua and 193 other cell types or tissues"/>
</dbReference>
<dbReference type="ExpressionAtlas" id="Q64695">
    <property type="expression patterns" value="baseline and differential"/>
</dbReference>
<dbReference type="GO" id="GO:0005813">
    <property type="term" value="C:centrosome"/>
    <property type="evidence" value="ECO:0000314"/>
    <property type="project" value="MGI"/>
</dbReference>
<dbReference type="GO" id="GO:0016020">
    <property type="term" value="C:membrane"/>
    <property type="evidence" value="ECO:0007669"/>
    <property type="project" value="UniProtKB-SubCell"/>
</dbReference>
<dbReference type="GO" id="GO:0038023">
    <property type="term" value="F:signaling receptor activity"/>
    <property type="evidence" value="ECO:0007669"/>
    <property type="project" value="InterPro"/>
</dbReference>
<dbReference type="GO" id="GO:0007596">
    <property type="term" value="P:blood coagulation"/>
    <property type="evidence" value="ECO:0007669"/>
    <property type="project" value="UniProtKB-KW"/>
</dbReference>
<dbReference type="GO" id="GO:0050819">
    <property type="term" value="P:negative regulation of coagulation"/>
    <property type="evidence" value="ECO:0000304"/>
    <property type="project" value="MGI"/>
</dbReference>
<dbReference type="FunFam" id="3.30.500.10:FF:000008">
    <property type="entry name" value="Endothelial protein C receptor"/>
    <property type="match status" value="1"/>
</dbReference>
<dbReference type="Gene3D" id="3.30.500.10">
    <property type="entry name" value="MHC class I-like antigen recognition-like"/>
    <property type="match status" value="1"/>
</dbReference>
<dbReference type="InterPro" id="IPR015669">
    <property type="entry name" value="Endothetial_C_recpt"/>
</dbReference>
<dbReference type="InterPro" id="IPR011161">
    <property type="entry name" value="MHC_I-like_Ag-recog"/>
</dbReference>
<dbReference type="InterPro" id="IPR037055">
    <property type="entry name" value="MHC_I-like_Ag-recog_sf"/>
</dbReference>
<dbReference type="InterPro" id="IPR011162">
    <property type="entry name" value="MHC_I/II-like_Ag-recog"/>
</dbReference>
<dbReference type="PANTHER" id="PTHR15349">
    <property type="entry name" value="ENDOTHELIAL PROTEIN C RECEPTOR"/>
    <property type="match status" value="1"/>
</dbReference>
<dbReference type="PANTHER" id="PTHR15349:SF0">
    <property type="entry name" value="ENDOTHELIAL PROTEIN C RECEPTOR"/>
    <property type="match status" value="1"/>
</dbReference>
<dbReference type="Pfam" id="PF16497">
    <property type="entry name" value="MHC_I_3"/>
    <property type="match status" value="1"/>
</dbReference>
<dbReference type="SUPFAM" id="SSF54452">
    <property type="entry name" value="MHC antigen-recognition domain"/>
    <property type="match status" value="1"/>
</dbReference>
<organism>
    <name type="scientific">Mus musculus</name>
    <name type="common">Mouse</name>
    <dbReference type="NCBI Taxonomy" id="10090"/>
    <lineage>
        <taxon>Eukaryota</taxon>
        <taxon>Metazoa</taxon>
        <taxon>Chordata</taxon>
        <taxon>Craniata</taxon>
        <taxon>Vertebrata</taxon>
        <taxon>Euteleostomi</taxon>
        <taxon>Mammalia</taxon>
        <taxon>Eutheria</taxon>
        <taxon>Euarchontoglires</taxon>
        <taxon>Glires</taxon>
        <taxon>Rodentia</taxon>
        <taxon>Myomorpha</taxon>
        <taxon>Muroidea</taxon>
        <taxon>Muridae</taxon>
        <taxon>Murinae</taxon>
        <taxon>Mus</taxon>
        <taxon>Mus</taxon>
    </lineage>
</organism>